<comment type="function">
    <text evidence="3 5">Inner membrane component of the type IV (T4S) secretion system that plays a role in surface and host cell adhesion, colonization, biofilm maturation, virulence, and twitching, a form of surface-associated motility. PilN/PilO heterodimers form the foundation of the inner-membrane PilM/PilN/PilO/PilP complex which plays an essential role in the assembly of a functional T4 pilus (PubMed:19857645). PilP connects PilO to the secretin PilQ. In turn, the PilM/PilN/PilO/PilP/PilQ complex facilitates transit of the pilus through the periplasm and clamps the pilus in the cell envelope (PubMed:23457250).</text>
</comment>
<comment type="subunit">
    <text evidence="3 4 5">Interacts with PilO, PilN and PilM (PubMed:19857645, PubMed:22053789). Interacts (via C-terminus) with the outer membrane secretin PilQ (PubMed:23457250).</text>
</comment>
<comment type="subcellular location">
    <subcellularLocation>
        <location evidence="3">Cell inner membrane</location>
        <topology evidence="1">Lipid-anchor</topology>
    </subcellularLocation>
</comment>
<comment type="disruption phenotype">
    <text evidence="3">Deletion mutants lack surface pili.</text>
</comment>
<sequence>MRARLILSSLLLASLAGCGGGSDFADLQSYMDEVRARPKGTIEPLPKFQPYEAFTYSAASLRSPFQPPVKIDLTVRQKGNKVIKPDETRVKQFLEGFNIETFEMVGTLSNAQGTFALVKGAGGVHRVRVGDYLGRNDGKVVGISEGKIDVIEIVPDGEGNWLERPRSLTLKERS</sequence>
<accession>G3XCX7</accession>
<name>PILP_PSEAE</name>
<proteinExistence type="evidence at protein level"/>
<reference key="1">
    <citation type="journal article" date="2000" name="Nature">
        <title>Complete genome sequence of Pseudomonas aeruginosa PAO1, an opportunistic pathogen.</title>
        <authorList>
            <person name="Stover C.K."/>
            <person name="Pham X.-Q.T."/>
            <person name="Erwin A.L."/>
            <person name="Mizoguchi S.D."/>
            <person name="Warrener P."/>
            <person name="Hickey M.J."/>
            <person name="Brinkman F.S.L."/>
            <person name="Hufnagle W.O."/>
            <person name="Kowalik D.J."/>
            <person name="Lagrou M."/>
            <person name="Garber R.L."/>
            <person name="Goltry L."/>
            <person name="Tolentino E."/>
            <person name="Westbrock-Wadman S."/>
            <person name="Yuan Y."/>
            <person name="Brody L.L."/>
            <person name="Coulter S.N."/>
            <person name="Folger K.R."/>
            <person name="Kas A."/>
            <person name="Larbig K."/>
            <person name="Lim R.M."/>
            <person name="Smith K.A."/>
            <person name="Spencer D.H."/>
            <person name="Wong G.K.-S."/>
            <person name="Wu Z."/>
            <person name="Paulsen I.T."/>
            <person name="Reizer J."/>
            <person name="Saier M.H. Jr."/>
            <person name="Hancock R.E.W."/>
            <person name="Lory S."/>
            <person name="Olson M.V."/>
        </authorList>
    </citation>
    <scope>NUCLEOTIDE SEQUENCE [LARGE SCALE GENOMIC DNA]</scope>
    <source>
        <strain>ATCC 15692 / DSM 22644 / CIP 104116 / JCM 14847 / LMG 12228 / 1C / PRS 101 / PAO1</strain>
    </source>
</reference>
<reference key="2">
    <citation type="journal article" date="2009" name="J. Mol. Biol.">
        <title>PilM/N/O/P proteins form an inner membrane complex that affects the stability of the Pseudomonas aeruginosa type IV pilus secretin.</title>
        <authorList>
            <person name="Ayers M."/>
            <person name="Sampaleanu L.M."/>
            <person name="Tammam S."/>
            <person name="Koo J."/>
            <person name="Harvey H."/>
            <person name="Howell P.L."/>
            <person name="Burrows L.L."/>
        </authorList>
    </citation>
    <scope>FUNCTION</scope>
    <scope>SUBCELLULAR LOCATION</scope>
    <scope>INTERACTION WITH PILM; PILO AND PILN</scope>
    <scope>DISRUPTION PHENOTYPE</scope>
</reference>
<reference key="3">
    <citation type="journal article" date="2011" name="Mol. Microbiol.">
        <title>Characterization of the PilN, PilO and PilP type IVa pilus subcomplex.</title>
        <authorList>
            <person name="Tammam S."/>
            <person name="Sampaleanu L.M."/>
            <person name="Koo J."/>
            <person name="Sundaram P."/>
            <person name="Ayers M."/>
            <person name="Chong P.A."/>
            <person name="Forman-Kay J.D."/>
            <person name="Burrows L.L."/>
            <person name="Howell P.L."/>
        </authorList>
    </citation>
    <scope>INTERACTION WITH PILO AND PILN</scope>
</reference>
<reference key="4">
    <citation type="journal article" date="2013" name="J. Bacteriol.">
        <title>PilMNOPQ from the Pseudomonas aeruginosa type IV pilus system form a transenvelope protein interaction network that interacts with PilA.</title>
        <authorList>
            <person name="Tammam S."/>
            <person name="Sampaleanu L.M."/>
            <person name="Koo J."/>
            <person name="Manoharan K."/>
            <person name="Daubaras M."/>
            <person name="Burrows L.L."/>
            <person name="Howell P.L."/>
        </authorList>
    </citation>
    <scope>FUNCTION</scope>
    <scope>INTERACTION WITH PILQ</scope>
</reference>
<reference evidence="8" key="5">
    <citation type="submission" date="2011-01" db="PDB data bank">
        <title>Structure of a Domain from the Type Iv Pilus Biogenesis Lipoprotein Pilp, from Pseudomonas Aeruginosa.</title>
        <authorList>
            <person name="Berry J."/>
            <person name="Derrick J.P."/>
        </authorList>
    </citation>
    <scope>X-RAY CRYSTALLOGRAPHY (1.70 ANGSTROMS) OF 83-171 IN COMPLEX WITH ZINC</scope>
</reference>
<reference evidence="7" key="6">
    <citation type="submission" date="2011-01" db="PDB data bank">
        <title>Structure of a Domain from the Type Iv Pilus Biogenesis Lipoprotein Pilp.</title>
        <authorList>
            <person name="Berry J."/>
            <person name="Derrick J.P."/>
        </authorList>
    </citation>
    <scope>X-RAY CRYSTALLOGRAPHY (1.70 ANGSTROMS) OF 83-171</scope>
</reference>
<gene>
    <name type="primary">pilP</name>
    <name type="ordered locus">PA5041</name>
</gene>
<keyword id="KW-0002">3D-structure</keyword>
<keyword id="KW-0997">Cell inner membrane</keyword>
<keyword id="KW-1003">Cell membrane</keyword>
<keyword id="KW-0449">Lipoprotein</keyword>
<keyword id="KW-0472">Membrane</keyword>
<keyword id="KW-0564">Palmitate</keyword>
<keyword id="KW-1185">Reference proteome</keyword>
<keyword id="KW-0732">Signal</keyword>
<feature type="signal peptide" evidence="2">
    <location>
        <begin position="1"/>
        <end position="17"/>
    </location>
</feature>
<feature type="chain" id="PRO_5003460107" description="Type IV pilus inner membrane component PilP" evidence="2">
    <location>
        <begin position="18"/>
        <end position="174"/>
    </location>
</feature>
<feature type="lipid moiety-binding region" description="N-palmitoyl cysteine" evidence="2">
    <location>
        <position position="18"/>
    </location>
</feature>
<feature type="lipid moiety-binding region" description="S-diacylglycerol cysteine" evidence="2">
    <location>
        <position position="18"/>
    </location>
</feature>
<feature type="strand" evidence="10">
    <location>
        <begin position="87"/>
        <end position="89"/>
    </location>
</feature>
<feature type="helix" evidence="9">
    <location>
        <begin position="93"/>
        <end position="96"/>
    </location>
</feature>
<feature type="helix" evidence="9">
    <location>
        <begin position="99"/>
        <end position="101"/>
    </location>
</feature>
<feature type="strand" evidence="9">
    <location>
        <begin position="103"/>
        <end position="110"/>
    </location>
</feature>
<feature type="strand" evidence="9">
    <location>
        <begin position="113"/>
        <end position="120"/>
    </location>
</feature>
<feature type="strand" evidence="9">
    <location>
        <begin position="123"/>
        <end position="127"/>
    </location>
</feature>
<feature type="turn" evidence="9">
    <location>
        <begin position="134"/>
        <end position="137"/>
    </location>
</feature>
<feature type="strand" evidence="9">
    <location>
        <begin position="138"/>
        <end position="144"/>
    </location>
</feature>
<feature type="strand" evidence="9">
    <location>
        <begin position="147"/>
        <end position="155"/>
    </location>
</feature>
<feature type="strand" evidence="9">
    <location>
        <begin position="157"/>
        <end position="159"/>
    </location>
</feature>
<feature type="strand" evidence="9">
    <location>
        <begin position="161"/>
        <end position="169"/>
    </location>
</feature>
<organism>
    <name type="scientific">Pseudomonas aeruginosa (strain ATCC 15692 / DSM 22644 / CIP 104116 / JCM 14847 / LMG 12228 / 1C / PRS 101 / PAO1)</name>
    <dbReference type="NCBI Taxonomy" id="208964"/>
    <lineage>
        <taxon>Bacteria</taxon>
        <taxon>Pseudomonadati</taxon>
        <taxon>Pseudomonadota</taxon>
        <taxon>Gammaproteobacteria</taxon>
        <taxon>Pseudomonadales</taxon>
        <taxon>Pseudomonadaceae</taxon>
        <taxon>Pseudomonas</taxon>
    </lineage>
</organism>
<dbReference type="EMBL" id="AE004091">
    <property type="protein sequence ID" value="AAG08426.1"/>
    <property type="molecule type" value="Genomic_DNA"/>
</dbReference>
<dbReference type="PIR" id="S77729">
    <property type="entry name" value="S77729"/>
</dbReference>
<dbReference type="RefSeq" id="NP_253728.1">
    <property type="nucleotide sequence ID" value="NC_002516.2"/>
</dbReference>
<dbReference type="RefSeq" id="WP_003095836.1">
    <property type="nucleotide sequence ID" value="NZ_QZGE01000002.1"/>
</dbReference>
<dbReference type="PDB" id="2Y4X">
    <property type="method" value="X-ray"/>
    <property type="resolution" value="1.70 A"/>
    <property type="chains" value="A/B=83-171"/>
</dbReference>
<dbReference type="PDB" id="2Y4Y">
    <property type="method" value="X-ray"/>
    <property type="resolution" value="1.70 A"/>
    <property type="chains" value="A/B/C/D=83-171"/>
</dbReference>
<dbReference type="PDBsum" id="2Y4X"/>
<dbReference type="PDBsum" id="2Y4Y"/>
<dbReference type="SMR" id="G3XCX7"/>
<dbReference type="STRING" id="208964.PA5041"/>
<dbReference type="PaxDb" id="208964-PA5041"/>
<dbReference type="GeneID" id="880984"/>
<dbReference type="KEGG" id="pae:PA5041"/>
<dbReference type="PATRIC" id="fig|208964.12.peg.5285"/>
<dbReference type="PseudoCAP" id="PA5041"/>
<dbReference type="HOGENOM" id="CLU_109321_1_0_6"/>
<dbReference type="InParanoid" id="G3XCX7"/>
<dbReference type="OrthoDB" id="5296580at2"/>
<dbReference type="PhylomeDB" id="G3XCX7"/>
<dbReference type="EvolutionaryTrace" id="G3XCX7"/>
<dbReference type="Proteomes" id="UP000002438">
    <property type="component" value="Chromosome"/>
</dbReference>
<dbReference type="GO" id="GO:0005886">
    <property type="term" value="C:plasma membrane"/>
    <property type="evidence" value="ECO:0007669"/>
    <property type="project" value="UniProtKB-SubCell"/>
</dbReference>
<dbReference type="GO" id="GO:0044096">
    <property type="term" value="C:type IV pilus"/>
    <property type="evidence" value="ECO:0000315"/>
    <property type="project" value="PseudoCAP"/>
</dbReference>
<dbReference type="GO" id="GO:0043683">
    <property type="term" value="P:type IV pilus assembly"/>
    <property type="evidence" value="ECO:0000315"/>
    <property type="project" value="PseudoCAP"/>
</dbReference>
<dbReference type="GO" id="GO:0043107">
    <property type="term" value="P:type IV pilus-dependent motility"/>
    <property type="evidence" value="ECO:0000315"/>
    <property type="project" value="PseudoCAP"/>
</dbReference>
<dbReference type="FunFam" id="2.30.30.830:FF:000001">
    <property type="entry name" value="Type 4 fimbrial biogenesis protein PilP"/>
    <property type="match status" value="1"/>
</dbReference>
<dbReference type="Gene3D" id="2.30.30.830">
    <property type="match status" value="1"/>
</dbReference>
<dbReference type="InterPro" id="IPR007446">
    <property type="entry name" value="PilP"/>
</dbReference>
<dbReference type="Pfam" id="PF04351">
    <property type="entry name" value="PilP"/>
    <property type="match status" value="1"/>
</dbReference>
<dbReference type="PIRSF" id="PIRSF016481">
    <property type="entry name" value="Pilus_assembly_PilP"/>
    <property type="match status" value="1"/>
</dbReference>
<dbReference type="PROSITE" id="PS51257">
    <property type="entry name" value="PROKAR_LIPOPROTEIN"/>
    <property type="match status" value="1"/>
</dbReference>
<evidence type="ECO:0000255" key="1"/>
<evidence type="ECO:0000255" key="2">
    <source>
        <dbReference type="PROSITE-ProRule" id="PRU00303"/>
    </source>
</evidence>
<evidence type="ECO:0000269" key="3">
    <source>
    </source>
</evidence>
<evidence type="ECO:0000269" key="4">
    <source>
    </source>
</evidence>
<evidence type="ECO:0000269" key="5">
    <source>
    </source>
</evidence>
<evidence type="ECO:0000303" key="6">
    <source>
    </source>
</evidence>
<evidence type="ECO:0007744" key="7">
    <source>
        <dbReference type="PDB" id="2Y4X"/>
    </source>
</evidence>
<evidence type="ECO:0007744" key="8">
    <source>
        <dbReference type="PDB" id="2Y4Y"/>
    </source>
</evidence>
<evidence type="ECO:0007829" key="9">
    <source>
        <dbReference type="PDB" id="2Y4X"/>
    </source>
</evidence>
<evidence type="ECO:0007829" key="10">
    <source>
        <dbReference type="PDB" id="2Y4Y"/>
    </source>
</evidence>
<protein>
    <recommendedName>
        <fullName evidence="6">Type IV pilus inner membrane component PilP</fullName>
    </recommendedName>
</protein>